<evidence type="ECO:0000255" key="1">
    <source>
        <dbReference type="HAMAP-Rule" id="MF_01321"/>
    </source>
</evidence>
<feature type="chain" id="PRO_0000047885" description="DNA-directed RNA polymerase subunit beta">
    <location>
        <begin position="1"/>
        <end position="1234"/>
    </location>
</feature>
<name>RPOB_CLOPE</name>
<organism>
    <name type="scientific">Clostridium perfringens (strain 13 / Type A)</name>
    <dbReference type="NCBI Taxonomy" id="195102"/>
    <lineage>
        <taxon>Bacteria</taxon>
        <taxon>Bacillati</taxon>
        <taxon>Bacillota</taxon>
        <taxon>Clostridia</taxon>
        <taxon>Eubacteriales</taxon>
        <taxon>Clostridiaceae</taxon>
        <taxon>Clostridium</taxon>
    </lineage>
</organism>
<gene>
    <name evidence="1" type="primary">rpoB</name>
    <name type="ordered locus">CPE2413</name>
</gene>
<accession>P0C2E7</accession>
<accession>Q93R88</accession>
<reference key="1">
    <citation type="journal article" date="2002" name="Proc. Natl. Acad. Sci. U.S.A.">
        <title>Complete genome sequence of Clostridium perfringens, an anaerobic flesh-eater.</title>
        <authorList>
            <person name="Shimizu T."/>
            <person name="Ohtani K."/>
            <person name="Hirakawa H."/>
            <person name="Ohshima K."/>
            <person name="Yamashita A."/>
            <person name="Shiba T."/>
            <person name="Ogasawara N."/>
            <person name="Hattori M."/>
            <person name="Kuhara S."/>
            <person name="Hayashi H."/>
        </authorList>
    </citation>
    <scope>NUCLEOTIDE SEQUENCE [LARGE SCALE GENOMIC DNA]</scope>
    <source>
        <strain>13 / Type A</strain>
    </source>
</reference>
<protein>
    <recommendedName>
        <fullName evidence="1">DNA-directed RNA polymerase subunit beta</fullName>
        <shortName evidence="1">RNAP subunit beta</shortName>
        <ecNumber evidence="1">2.7.7.6</ecNumber>
    </recommendedName>
    <alternativeName>
        <fullName evidence="1">RNA polymerase subunit beta</fullName>
    </alternativeName>
    <alternativeName>
        <fullName evidence="1">Transcriptase subunit beta</fullName>
    </alternativeName>
</protein>
<comment type="function">
    <text evidence="1">DNA-dependent RNA polymerase catalyzes the transcription of DNA into RNA using the four ribonucleoside triphosphates as substrates.</text>
</comment>
<comment type="catalytic activity">
    <reaction evidence="1">
        <text>RNA(n) + a ribonucleoside 5'-triphosphate = RNA(n+1) + diphosphate</text>
        <dbReference type="Rhea" id="RHEA:21248"/>
        <dbReference type="Rhea" id="RHEA-COMP:14527"/>
        <dbReference type="Rhea" id="RHEA-COMP:17342"/>
        <dbReference type="ChEBI" id="CHEBI:33019"/>
        <dbReference type="ChEBI" id="CHEBI:61557"/>
        <dbReference type="ChEBI" id="CHEBI:140395"/>
        <dbReference type="EC" id="2.7.7.6"/>
    </reaction>
</comment>
<comment type="subunit">
    <text evidence="1">The RNAP catalytic core consists of 2 alpha, 1 beta, 1 beta' and 1 omega subunit. When a sigma factor is associated with the core the holoenzyme is formed, which can initiate transcription.</text>
</comment>
<comment type="similarity">
    <text evidence="1">Belongs to the RNA polymerase beta chain family.</text>
</comment>
<sequence length="1234" mass="138550">MVHPVQVGKRTRMSFAKVKDVAEMPNLIEIQLDSYKWFLDAGLYEVFDDINPISNFTGNLVLEFVGYTLDMDNIKYSVEECKERDTTYAAPLKVAVRLQNKETGEIKEQEVFMGDFPLMTEQGTFIINGAERVIVSQLVRSPGVYYNYNVDKTGKKLFSATVIPNRGAWLEYETDSNDVIYVRIDKTRKLPISILGRAMGFGSDQELLEYFGEEERFKATIEKDNTKTKEEALLEIYKRLRPGEPPTVDSAISLIDSLFFDAKRYDLSRVGRYKFNKKLAIGLRIANQIAAEDIVDKLTGEVLVAKGEKISRANAEEIQNRGINSVDVLVEDRVIRIIGNHFVDIHKCVDFDISDLNIRELVHYPTLREILDNYSDEETIKEEIKKNMTRLIPKHIIKDDIFATISYQIGLAYNIGYVDDIDHLGNRRLRSVGELLQNQFRIGLSRMERVVKERMTIQDQEAITPQQLINIRPVAAAIKEFFGSSQLSQFMDQTNPLSELTHKRRLSALGPGGLSRERAGFEVRDVHHSHYGRMCPIETPEGPNIGLINSLATYAKVNEYGFIETPYRVVDKAEGRVTGEIRYFTADEEDQYLVAQANEPLDENGCFIDKKVTVRDKGEVLVVPSKDVDLMDVSPRQLVSVATAMIPFLENDDASRALMGSNMQRQAVPLLKPYAPIVGTGIEYKAAVDSGVLPKAKNAGEVVYVSANEVRVKRELDGGVDTYRLLKFKRSNQGTCINQRPIVAKGDWVLKGEVLADGPSTDLGEIALGKNIRMGFITWEGYNYEDAMLISEELVREDVFTSIHIEEYECEARDTKLGPEEITRDIPNVSEDALKDIDERGIIRIGAEVRSGDILVGKVTPKGETELTAEERLLRAIFGEKAREVRDTSLRVPHGEAGIIVDVKVFTRENGDDLSPGVNELVRCYIAQKRKISVGDKMAGRHGNKGVISRVLPEEDMPFLPDGRPLQICLNPLGVPSRMNIGQVLEVHLGWAASALGWHIATPVFDGATETDIEDCLEKAGYNRNGKTVLRDGRTGEEFDNEVTVGIMYILKLAHLVDDKIHARSTGPYSLVTQQPLGGKAQFGGQRFGEMEVWALEAYGAAHTLQEILTVKSDDVVGRVKTYEAIVKGENIPEPGVPESFKVLIKELQALCLDVKVLNDNNQEVKFKELAEDDDEIEVLEVNMEGTEDSTTEEAKEEKGEAYIPAEEIDEEIDYENIDLLDFTSDLDIEDDFN</sequence>
<keyword id="KW-0240">DNA-directed RNA polymerase</keyword>
<keyword id="KW-0548">Nucleotidyltransferase</keyword>
<keyword id="KW-1185">Reference proteome</keyword>
<keyword id="KW-0804">Transcription</keyword>
<keyword id="KW-0808">Transferase</keyword>
<dbReference type="EC" id="2.7.7.6" evidence="1"/>
<dbReference type="EMBL" id="BA000016">
    <property type="protein sequence ID" value="BAB82119.1"/>
    <property type="molecule type" value="Genomic_DNA"/>
</dbReference>
<dbReference type="RefSeq" id="WP_003460611.1">
    <property type="nucleotide sequence ID" value="NC_003366.1"/>
</dbReference>
<dbReference type="SMR" id="P0C2E7"/>
<dbReference type="STRING" id="195102.gene:10491730"/>
<dbReference type="GeneID" id="93001001"/>
<dbReference type="KEGG" id="cpe:CPE2413"/>
<dbReference type="HOGENOM" id="CLU_000524_4_1_9"/>
<dbReference type="Proteomes" id="UP000000818">
    <property type="component" value="Chromosome"/>
</dbReference>
<dbReference type="GO" id="GO:0000428">
    <property type="term" value="C:DNA-directed RNA polymerase complex"/>
    <property type="evidence" value="ECO:0007669"/>
    <property type="project" value="UniProtKB-KW"/>
</dbReference>
<dbReference type="GO" id="GO:0003677">
    <property type="term" value="F:DNA binding"/>
    <property type="evidence" value="ECO:0007669"/>
    <property type="project" value="UniProtKB-UniRule"/>
</dbReference>
<dbReference type="GO" id="GO:0003899">
    <property type="term" value="F:DNA-directed RNA polymerase activity"/>
    <property type="evidence" value="ECO:0007669"/>
    <property type="project" value="UniProtKB-UniRule"/>
</dbReference>
<dbReference type="GO" id="GO:0032549">
    <property type="term" value="F:ribonucleoside binding"/>
    <property type="evidence" value="ECO:0007669"/>
    <property type="project" value="InterPro"/>
</dbReference>
<dbReference type="GO" id="GO:0006351">
    <property type="term" value="P:DNA-templated transcription"/>
    <property type="evidence" value="ECO:0007669"/>
    <property type="project" value="UniProtKB-UniRule"/>
</dbReference>
<dbReference type="CDD" id="cd00653">
    <property type="entry name" value="RNA_pol_B_RPB2"/>
    <property type="match status" value="1"/>
</dbReference>
<dbReference type="FunFam" id="3.90.1800.10:FF:000001">
    <property type="entry name" value="DNA-directed RNA polymerase subunit beta"/>
    <property type="match status" value="1"/>
</dbReference>
<dbReference type="Gene3D" id="2.40.50.100">
    <property type="match status" value="1"/>
</dbReference>
<dbReference type="Gene3D" id="2.40.50.150">
    <property type="match status" value="1"/>
</dbReference>
<dbReference type="Gene3D" id="3.90.1100.10">
    <property type="match status" value="2"/>
</dbReference>
<dbReference type="Gene3D" id="2.40.270.10">
    <property type="entry name" value="DNA-directed RNA polymerase, subunit 2, domain 6"/>
    <property type="match status" value="1"/>
</dbReference>
<dbReference type="Gene3D" id="3.90.1800.10">
    <property type="entry name" value="RNA polymerase alpha subunit dimerisation domain"/>
    <property type="match status" value="1"/>
</dbReference>
<dbReference type="Gene3D" id="3.90.1110.10">
    <property type="entry name" value="RNA polymerase Rpb2, domain 2"/>
    <property type="match status" value="1"/>
</dbReference>
<dbReference type="HAMAP" id="MF_01321">
    <property type="entry name" value="RNApol_bact_RpoB"/>
    <property type="match status" value="1"/>
</dbReference>
<dbReference type="InterPro" id="IPR019462">
    <property type="entry name" value="DNA-dir_RNA_pol_bsu_external_1"/>
</dbReference>
<dbReference type="InterPro" id="IPR015712">
    <property type="entry name" value="DNA-dir_RNA_pol_su2"/>
</dbReference>
<dbReference type="InterPro" id="IPR007120">
    <property type="entry name" value="DNA-dir_RNAP_su2_dom"/>
</dbReference>
<dbReference type="InterPro" id="IPR037033">
    <property type="entry name" value="DNA-dir_RNAP_su2_hyb_sf"/>
</dbReference>
<dbReference type="InterPro" id="IPR010243">
    <property type="entry name" value="RNA_pol_bsu_bac"/>
</dbReference>
<dbReference type="InterPro" id="IPR007121">
    <property type="entry name" value="RNA_pol_bsu_CS"/>
</dbReference>
<dbReference type="InterPro" id="IPR007644">
    <property type="entry name" value="RNA_pol_bsu_protrusion"/>
</dbReference>
<dbReference type="InterPro" id="IPR007642">
    <property type="entry name" value="RNA_pol_Rpb2_2"/>
</dbReference>
<dbReference type="InterPro" id="IPR037034">
    <property type="entry name" value="RNA_pol_Rpb2_2_sf"/>
</dbReference>
<dbReference type="InterPro" id="IPR007645">
    <property type="entry name" value="RNA_pol_Rpb2_3"/>
</dbReference>
<dbReference type="InterPro" id="IPR007641">
    <property type="entry name" value="RNA_pol_Rpb2_7"/>
</dbReference>
<dbReference type="InterPro" id="IPR014724">
    <property type="entry name" value="RNA_pol_RPB2_OB-fold"/>
</dbReference>
<dbReference type="NCBIfam" id="NF001616">
    <property type="entry name" value="PRK00405.1"/>
    <property type="match status" value="1"/>
</dbReference>
<dbReference type="NCBIfam" id="TIGR02013">
    <property type="entry name" value="rpoB"/>
    <property type="match status" value="1"/>
</dbReference>
<dbReference type="PANTHER" id="PTHR20856">
    <property type="entry name" value="DNA-DIRECTED RNA POLYMERASE I SUBUNIT 2"/>
    <property type="match status" value="1"/>
</dbReference>
<dbReference type="Pfam" id="PF04563">
    <property type="entry name" value="RNA_pol_Rpb2_1"/>
    <property type="match status" value="1"/>
</dbReference>
<dbReference type="Pfam" id="PF04561">
    <property type="entry name" value="RNA_pol_Rpb2_2"/>
    <property type="match status" value="2"/>
</dbReference>
<dbReference type="Pfam" id="PF04565">
    <property type="entry name" value="RNA_pol_Rpb2_3"/>
    <property type="match status" value="1"/>
</dbReference>
<dbReference type="Pfam" id="PF10385">
    <property type="entry name" value="RNA_pol_Rpb2_45"/>
    <property type="match status" value="1"/>
</dbReference>
<dbReference type="Pfam" id="PF00562">
    <property type="entry name" value="RNA_pol_Rpb2_6"/>
    <property type="match status" value="1"/>
</dbReference>
<dbReference type="Pfam" id="PF04560">
    <property type="entry name" value="RNA_pol_Rpb2_7"/>
    <property type="match status" value="1"/>
</dbReference>
<dbReference type="SUPFAM" id="SSF64484">
    <property type="entry name" value="beta and beta-prime subunits of DNA dependent RNA-polymerase"/>
    <property type="match status" value="1"/>
</dbReference>
<dbReference type="PROSITE" id="PS01166">
    <property type="entry name" value="RNA_POL_BETA"/>
    <property type="match status" value="1"/>
</dbReference>
<proteinExistence type="inferred from homology"/>